<accession>Q9CK89</accession>
<feature type="chain" id="PRO_0000154682" description="Large ribosomal subunit protein uL10">
    <location>
        <begin position="1"/>
        <end position="163"/>
    </location>
</feature>
<comment type="function">
    <text evidence="1">Forms part of the ribosomal stalk, playing a central role in the interaction of the ribosome with GTP-bound translation factors.</text>
</comment>
<comment type="subunit">
    <text evidence="1">Part of the ribosomal stalk of the 50S ribosomal subunit. The N-terminus interacts with L11 and the large rRNA to form the base of the stalk. The C-terminus forms an elongated spine to which L12 dimers bind in a sequential fashion forming a multimeric L10(L12)X complex (By similarity).</text>
</comment>
<comment type="similarity">
    <text evidence="2">Belongs to the universal ribosomal protein uL10 family.</text>
</comment>
<reference key="1">
    <citation type="journal article" date="2001" name="Proc. Natl. Acad. Sci. U.S.A.">
        <title>Complete genomic sequence of Pasteurella multocida Pm70.</title>
        <authorList>
            <person name="May B.J."/>
            <person name="Zhang Q."/>
            <person name="Li L.L."/>
            <person name="Paustian M.L."/>
            <person name="Whittam T.S."/>
            <person name="Kapur V."/>
        </authorList>
    </citation>
    <scope>NUCLEOTIDE SEQUENCE [LARGE SCALE GENOMIC DNA]</scope>
    <source>
        <strain>Pm70</strain>
    </source>
</reference>
<proteinExistence type="inferred from homology"/>
<protein>
    <recommendedName>
        <fullName evidence="2">Large ribosomal subunit protein uL10</fullName>
    </recommendedName>
    <alternativeName>
        <fullName>50S ribosomal protein L10</fullName>
    </alternativeName>
</protein>
<sequence>MALNLQDKQAIVAEVNEAAKGALSAVIADSRGVTVDKMTELRKVARENGVSMRVVRNTLLRRAVEGTEFECLKDTFVGPTLIAFSTEHPGAAARLFKDFAKANDKFEIKGAAFEGKIQDVEFLATLPTYDEAIARLMGTMKEAAAGKLVRTLAALRDKLQEAA</sequence>
<dbReference type="EMBL" id="AE004439">
    <property type="protein sequence ID" value="AAK03823.1"/>
    <property type="molecule type" value="Genomic_DNA"/>
</dbReference>
<dbReference type="RefSeq" id="WP_005718814.1">
    <property type="nucleotide sequence ID" value="NC_002663.1"/>
</dbReference>
<dbReference type="SMR" id="Q9CK89"/>
<dbReference type="STRING" id="272843.PM1739"/>
<dbReference type="EnsemblBacteria" id="AAK03823">
    <property type="protein sequence ID" value="AAK03823"/>
    <property type="gene ID" value="PM1739"/>
</dbReference>
<dbReference type="GeneID" id="77206669"/>
<dbReference type="KEGG" id="pmu:PM1739"/>
<dbReference type="HOGENOM" id="CLU_092227_0_2_6"/>
<dbReference type="OrthoDB" id="9808307at2"/>
<dbReference type="Proteomes" id="UP000000809">
    <property type="component" value="Chromosome"/>
</dbReference>
<dbReference type="GO" id="GO:0015934">
    <property type="term" value="C:large ribosomal subunit"/>
    <property type="evidence" value="ECO:0007669"/>
    <property type="project" value="InterPro"/>
</dbReference>
<dbReference type="GO" id="GO:0070180">
    <property type="term" value="F:large ribosomal subunit rRNA binding"/>
    <property type="evidence" value="ECO:0007669"/>
    <property type="project" value="UniProtKB-UniRule"/>
</dbReference>
<dbReference type="GO" id="GO:0003735">
    <property type="term" value="F:structural constituent of ribosome"/>
    <property type="evidence" value="ECO:0007669"/>
    <property type="project" value="InterPro"/>
</dbReference>
<dbReference type="GO" id="GO:0006412">
    <property type="term" value="P:translation"/>
    <property type="evidence" value="ECO:0007669"/>
    <property type="project" value="UniProtKB-UniRule"/>
</dbReference>
<dbReference type="CDD" id="cd05797">
    <property type="entry name" value="Ribosomal_L10"/>
    <property type="match status" value="1"/>
</dbReference>
<dbReference type="FunFam" id="3.30.70.1730:FF:000001">
    <property type="entry name" value="50S ribosomal protein L10"/>
    <property type="match status" value="1"/>
</dbReference>
<dbReference type="Gene3D" id="3.30.70.1730">
    <property type="match status" value="1"/>
</dbReference>
<dbReference type="Gene3D" id="6.10.250.2350">
    <property type="match status" value="1"/>
</dbReference>
<dbReference type="HAMAP" id="MF_00362">
    <property type="entry name" value="Ribosomal_uL10"/>
    <property type="match status" value="1"/>
</dbReference>
<dbReference type="InterPro" id="IPR001790">
    <property type="entry name" value="Ribosomal_uL10"/>
</dbReference>
<dbReference type="InterPro" id="IPR043141">
    <property type="entry name" value="Ribosomal_uL10-like_sf"/>
</dbReference>
<dbReference type="InterPro" id="IPR022973">
    <property type="entry name" value="Ribosomal_uL10_bac"/>
</dbReference>
<dbReference type="InterPro" id="IPR047865">
    <property type="entry name" value="Ribosomal_uL10_bac_type"/>
</dbReference>
<dbReference type="InterPro" id="IPR002363">
    <property type="entry name" value="Ribosomal_uL10_CS_bac"/>
</dbReference>
<dbReference type="NCBIfam" id="NF000955">
    <property type="entry name" value="PRK00099.1-1"/>
    <property type="match status" value="1"/>
</dbReference>
<dbReference type="PANTHER" id="PTHR11560">
    <property type="entry name" value="39S RIBOSOMAL PROTEIN L10, MITOCHONDRIAL"/>
    <property type="match status" value="1"/>
</dbReference>
<dbReference type="Pfam" id="PF00466">
    <property type="entry name" value="Ribosomal_L10"/>
    <property type="match status" value="1"/>
</dbReference>
<dbReference type="SUPFAM" id="SSF160369">
    <property type="entry name" value="Ribosomal protein L10-like"/>
    <property type="match status" value="1"/>
</dbReference>
<dbReference type="PROSITE" id="PS01109">
    <property type="entry name" value="RIBOSOMAL_L10"/>
    <property type="match status" value="1"/>
</dbReference>
<evidence type="ECO:0000250" key="1"/>
<evidence type="ECO:0000305" key="2"/>
<organism>
    <name type="scientific">Pasteurella multocida (strain Pm70)</name>
    <dbReference type="NCBI Taxonomy" id="272843"/>
    <lineage>
        <taxon>Bacteria</taxon>
        <taxon>Pseudomonadati</taxon>
        <taxon>Pseudomonadota</taxon>
        <taxon>Gammaproteobacteria</taxon>
        <taxon>Pasteurellales</taxon>
        <taxon>Pasteurellaceae</taxon>
        <taxon>Pasteurella</taxon>
    </lineage>
</organism>
<gene>
    <name type="primary">rplJ</name>
    <name type="synonym">rpl10</name>
    <name type="ordered locus">PM1739</name>
</gene>
<name>RL10_PASMU</name>
<keyword id="KW-1185">Reference proteome</keyword>
<keyword id="KW-0687">Ribonucleoprotein</keyword>
<keyword id="KW-0689">Ribosomal protein</keyword>
<keyword id="KW-0694">RNA-binding</keyword>
<keyword id="KW-0699">rRNA-binding</keyword>